<accession>B2S0I7</accession>
<gene>
    <name evidence="1" type="primary">rpsC</name>
    <name type="ordered locus">BH0484</name>
</gene>
<dbReference type="EMBL" id="CP000048">
    <property type="protein sequence ID" value="AAX16993.1"/>
    <property type="molecule type" value="Genomic_DNA"/>
</dbReference>
<dbReference type="RefSeq" id="WP_012422247.1">
    <property type="nucleotide sequence ID" value="NZ_CP073136.1"/>
</dbReference>
<dbReference type="SMR" id="B2S0I7"/>
<dbReference type="GeneID" id="71843302"/>
<dbReference type="KEGG" id="bhr:BH0484"/>
<dbReference type="HOGENOM" id="CLU_058591_0_2_12"/>
<dbReference type="Proteomes" id="UP000008834">
    <property type="component" value="Chromosome"/>
</dbReference>
<dbReference type="GO" id="GO:0022627">
    <property type="term" value="C:cytosolic small ribosomal subunit"/>
    <property type="evidence" value="ECO:0007669"/>
    <property type="project" value="TreeGrafter"/>
</dbReference>
<dbReference type="GO" id="GO:0003729">
    <property type="term" value="F:mRNA binding"/>
    <property type="evidence" value="ECO:0007669"/>
    <property type="project" value="UniProtKB-UniRule"/>
</dbReference>
<dbReference type="GO" id="GO:0019843">
    <property type="term" value="F:rRNA binding"/>
    <property type="evidence" value="ECO:0007669"/>
    <property type="project" value="UniProtKB-UniRule"/>
</dbReference>
<dbReference type="GO" id="GO:0003735">
    <property type="term" value="F:structural constituent of ribosome"/>
    <property type="evidence" value="ECO:0007669"/>
    <property type="project" value="InterPro"/>
</dbReference>
<dbReference type="GO" id="GO:0006412">
    <property type="term" value="P:translation"/>
    <property type="evidence" value="ECO:0007669"/>
    <property type="project" value="UniProtKB-UniRule"/>
</dbReference>
<dbReference type="CDD" id="cd02412">
    <property type="entry name" value="KH-II_30S_S3"/>
    <property type="match status" value="1"/>
</dbReference>
<dbReference type="FunFam" id="3.30.300.20:FF:000001">
    <property type="entry name" value="30S ribosomal protein S3"/>
    <property type="match status" value="1"/>
</dbReference>
<dbReference type="Gene3D" id="3.30.300.20">
    <property type="match status" value="1"/>
</dbReference>
<dbReference type="Gene3D" id="3.30.1140.32">
    <property type="entry name" value="Ribosomal protein S3, C-terminal domain"/>
    <property type="match status" value="1"/>
</dbReference>
<dbReference type="HAMAP" id="MF_01309_B">
    <property type="entry name" value="Ribosomal_uS3_B"/>
    <property type="match status" value="1"/>
</dbReference>
<dbReference type="InterPro" id="IPR004087">
    <property type="entry name" value="KH_dom"/>
</dbReference>
<dbReference type="InterPro" id="IPR015946">
    <property type="entry name" value="KH_dom-like_a/b"/>
</dbReference>
<dbReference type="InterPro" id="IPR004044">
    <property type="entry name" value="KH_dom_type_2"/>
</dbReference>
<dbReference type="InterPro" id="IPR009019">
    <property type="entry name" value="KH_sf_prok-type"/>
</dbReference>
<dbReference type="InterPro" id="IPR036419">
    <property type="entry name" value="Ribosomal_S3_C_sf"/>
</dbReference>
<dbReference type="InterPro" id="IPR005704">
    <property type="entry name" value="Ribosomal_uS3_bac-typ"/>
</dbReference>
<dbReference type="InterPro" id="IPR001351">
    <property type="entry name" value="Ribosomal_uS3_C"/>
</dbReference>
<dbReference type="InterPro" id="IPR018280">
    <property type="entry name" value="Ribosomal_uS3_CS"/>
</dbReference>
<dbReference type="NCBIfam" id="TIGR01009">
    <property type="entry name" value="rpsC_bact"/>
    <property type="match status" value="1"/>
</dbReference>
<dbReference type="PANTHER" id="PTHR11760">
    <property type="entry name" value="30S/40S RIBOSOMAL PROTEIN S3"/>
    <property type="match status" value="1"/>
</dbReference>
<dbReference type="PANTHER" id="PTHR11760:SF19">
    <property type="entry name" value="SMALL RIBOSOMAL SUBUNIT PROTEIN US3C"/>
    <property type="match status" value="1"/>
</dbReference>
<dbReference type="Pfam" id="PF07650">
    <property type="entry name" value="KH_2"/>
    <property type="match status" value="1"/>
</dbReference>
<dbReference type="Pfam" id="PF00189">
    <property type="entry name" value="Ribosomal_S3_C"/>
    <property type="match status" value="1"/>
</dbReference>
<dbReference type="SMART" id="SM00322">
    <property type="entry name" value="KH"/>
    <property type="match status" value="1"/>
</dbReference>
<dbReference type="SUPFAM" id="SSF54814">
    <property type="entry name" value="Prokaryotic type KH domain (KH-domain type II)"/>
    <property type="match status" value="1"/>
</dbReference>
<dbReference type="SUPFAM" id="SSF54821">
    <property type="entry name" value="Ribosomal protein S3 C-terminal domain"/>
    <property type="match status" value="1"/>
</dbReference>
<dbReference type="PROSITE" id="PS50823">
    <property type="entry name" value="KH_TYPE_2"/>
    <property type="match status" value="1"/>
</dbReference>
<dbReference type="PROSITE" id="PS00548">
    <property type="entry name" value="RIBOSOMAL_S3"/>
    <property type="match status" value="1"/>
</dbReference>
<feature type="chain" id="PRO_1000140926" description="Small ribosomal subunit protein uS3">
    <location>
        <begin position="1"/>
        <end position="276"/>
    </location>
</feature>
<feature type="domain" description="KH type-2" evidence="1">
    <location>
        <begin position="39"/>
        <end position="110"/>
    </location>
</feature>
<feature type="region of interest" description="Disordered" evidence="2">
    <location>
        <begin position="218"/>
        <end position="243"/>
    </location>
</feature>
<feature type="compositionally biased region" description="Basic and acidic residues" evidence="2">
    <location>
        <begin position="227"/>
        <end position="243"/>
    </location>
</feature>
<proteinExistence type="inferred from homology"/>
<evidence type="ECO:0000255" key="1">
    <source>
        <dbReference type="HAMAP-Rule" id="MF_01309"/>
    </source>
</evidence>
<evidence type="ECO:0000256" key="2">
    <source>
        <dbReference type="SAM" id="MobiDB-lite"/>
    </source>
</evidence>
<evidence type="ECO:0000305" key="3"/>
<sequence length="276" mass="31422">MGQKVHPYSLRIKINRDWKSKWYFDKKLYSEILHEDFLIRRETMKFFKGIRFDISDIEIIRNNLQRVTVVVSTPRPGSVIGVKGANLEKIGQLLTRKISKKINIKIKEIKKPEFDAQIVANGIAKQLENRASYRKLLKSSLLSSISKGVQGVKIKVSGRLGGAEIARSFEVKEGRVPLHTLRANIDYGFAEAQTTYGVIGVKVWLFKGEVLGKQTNSDAGQVINRKSSREKSEHFDRSRVDDRGRKVLNDDKFSKEKLELGSKSNNDFKKKNGSDV</sequence>
<keyword id="KW-0687">Ribonucleoprotein</keyword>
<keyword id="KW-0689">Ribosomal protein</keyword>
<keyword id="KW-0694">RNA-binding</keyword>
<keyword id="KW-0699">rRNA-binding</keyword>
<name>RS3_BORHD</name>
<reference key="1">
    <citation type="submission" date="2004-12" db="EMBL/GenBank/DDBJ databases">
        <title>The genome sequence of Borrelia hermsii and Borrelia turicatae: comparative analysis of two agents of endemic N. America relapsing fever.</title>
        <authorList>
            <person name="Porcella S.F."/>
            <person name="Raffel S.J."/>
            <person name="Schrumpf M.E."/>
            <person name="Montgomery B."/>
            <person name="Smith T."/>
            <person name="Schwan T.G."/>
        </authorList>
    </citation>
    <scope>NUCLEOTIDE SEQUENCE [LARGE SCALE GENOMIC DNA]</scope>
    <source>
        <strain>HS1 / DAH</strain>
    </source>
</reference>
<organism>
    <name type="scientific">Borrelia hermsii (strain HS1 / DAH)</name>
    <dbReference type="NCBI Taxonomy" id="314723"/>
    <lineage>
        <taxon>Bacteria</taxon>
        <taxon>Pseudomonadati</taxon>
        <taxon>Spirochaetota</taxon>
        <taxon>Spirochaetia</taxon>
        <taxon>Spirochaetales</taxon>
        <taxon>Borreliaceae</taxon>
        <taxon>Borrelia</taxon>
    </lineage>
</organism>
<comment type="function">
    <text evidence="1">Binds the lower part of the 30S subunit head. Binds mRNA in the 70S ribosome, positioning it for translation.</text>
</comment>
<comment type="subunit">
    <text evidence="1">Part of the 30S ribosomal subunit. Forms a tight complex with proteins S10 and S14.</text>
</comment>
<comment type="similarity">
    <text evidence="1">Belongs to the universal ribosomal protein uS3 family.</text>
</comment>
<protein>
    <recommendedName>
        <fullName evidence="1">Small ribosomal subunit protein uS3</fullName>
    </recommendedName>
    <alternativeName>
        <fullName evidence="3">30S ribosomal protein S3</fullName>
    </alternativeName>
</protein>